<proteinExistence type="inferred from homology"/>
<dbReference type="EC" id="2.3.1.275" evidence="1"/>
<dbReference type="EMBL" id="CP001154">
    <property type="protein sequence ID" value="ACO73616.1"/>
    <property type="molecule type" value="Genomic_DNA"/>
</dbReference>
<dbReference type="RefSeq" id="WP_012696108.1">
    <property type="nucleotide sequence ID" value="NC_012559.1"/>
</dbReference>
<dbReference type="SMR" id="C1DCY1"/>
<dbReference type="STRING" id="557598.LHK_00623"/>
<dbReference type="GeneID" id="75108966"/>
<dbReference type="KEGG" id="lhk:LHK_00623"/>
<dbReference type="eggNOG" id="COG0344">
    <property type="taxonomic scope" value="Bacteria"/>
</dbReference>
<dbReference type="HOGENOM" id="CLU_081254_0_0_4"/>
<dbReference type="UniPathway" id="UPA00085"/>
<dbReference type="Proteomes" id="UP000002010">
    <property type="component" value="Chromosome"/>
</dbReference>
<dbReference type="GO" id="GO:0005886">
    <property type="term" value="C:plasma membrane"/>
    <property type="evidence" value="ECO:0007669"/>
    <property type="project" value="UniProtKB-SubCell"/>
</dbReference>
<dbReference type="GO" id="GO:0043772">
    <property type="term" value="F:acyl-phosphate glycerol-3-phosphate acyltransferase activity"/>
    <property type="evidence" value="ECO:0007669"/>
    <property type="project" value="UniProtKB-UniRule"/>
</dbReference>
<dbReference type="GO" id="GO:0008654">
    <property type="term" value="P:phospholipid biosynthetic process"/>
    <property type="evidence" value="ECO:0007669"/>
    <property type="project" value="UniProtKB-UniRule"/>
</dbReference>
<dbReference type="HAMAP" id="MF_01043">
    <property type="entry name" value="PlsY"/>
    <property type="match status" value="1"/>
</dbReference>
<dbReference type="InterPro" id="IPR003811">
    <property type="entry name" value="G3P_acylTferase_PlsY"/>
</dbReference>
<dbReference type="NCBIfam" id="TIGR00023">
    <property type="entry name" value="glycerol-3-phosphate 1-O-acyltransferase PlsY"/>
    <property type="match status" value="1"/>
</dbReference>
<dbReference type="PANTHER" id="PTHR30309:SF0">
    <property type="entry name" value="GLYCEROL-3-PHOSPHATE ACYLTRANSFERASE-RELATED"/>
    <property type="match status" value="1"/>
</dbReference>
<dbReference type="PANTHER" id="PTHR30309">
    <property type="entry name" value="INNER MEMBRANE PROTEIN YGIH"/>
    <property type="match status" value="1"/>
</dbReference>
<dbReference type="Pfam" id="PF02660">
    <property type="entry name" value="G3P_acyltransf"/>
    <property type="match status" value="1"/>
</dbReference>
<dbReference type="SMART" id="SM01207">
    <property type="entry name" value="G3P_acyltransf"/>
    <property type="match status" value="1"/>
</dbReference>
<accession>C1DCY1</accession>
<keyword id="KW-0997">Cell inner membrane</keyword>
<keyword id="KW-1003">Cell membrane</keyword>
<keyword id="KW-0444">Lipid biosynthesis</keyword>
<keyword id="KW-0443">Lipid metabolism</keyword>
<keyword id="KW-0472">Membrane</keyword>
<keyword id="KW-0594">Phospholipid biosynthesis</keyword>
<keyword id="KW-1208">Phospholipid metabolism</keyword>
<keyword id="KW-1185">Reference proteome</keyword>
<keyword id="KW-0808">Transferase</keyword>
<keyword id="KW-0812">Transmembrane</keyword>
<keyword id="KW-1133">Transmembrane helix</keyword>
<comment type="function">
    <text evidence="1">Catalyzes the transfer of an acyl group from acyl-phosphate (acyl-PO(4)) to glycerol-3-phosphate (G3P) to form lysophosphatidic acid (LPA). This enzyme utilizes acyl-phosphate as fatty acyl donor, but not acyl-CoA or acyl-ACP.</text>
</comment>
<comment type="catalytic activity">
    <reaction evidence="1">
        <text>an acyl phosphate + sn-glycerol 3-phosphate = a 1-acyl-sn-glycero-3-phosphate + phosphate</text>
        <dbReference type="Rhea" id="RHEA:34075"/>
        <dbReference type="ChEBI" id="CHEBI:43474"/>
        <dbReference type="ChEBI" id="CHEBI:57597"/>
        <dbReference type="ChEBI" id="CHEBI:57970"/>
        <dbReference type="ChEBI" id="CHEBI:59918"/>
        <dbReference type="EC" id="2.3.1.275"/>
    </reaction>
</comment>
<comment type="pathway">
    <text evidence="1">Lipid metabolism; phospholipid metabolism.</text>
</comment>
<comment type="subunit">
    <text evidence="1">Probably interacts with PlsX.</text>
</comment>
<comment type="subcellular location">
    <subcellularLocation>
        <location evidence="1">Cell inner membrane</location>
        <topology evidence="1">Multi-pass membrane protein</topology>
    </subcellularLocation>
</comment>
<comment type="similarity">
    <text evidence="1">Belongs to the PlsY family.</text>
</comment>
<evidence type="ECO:0000255" key="1">
    <source>
        <dbReference type="HAMAP-Rule" id="MF_01043"/>
    </source>
</evidence>
<sequence length="201" mass="20696">MTTIASLVLAYLLGSVPFAVLVSLGMGLADPRSYGSGNPGATNVLRSGNKLAALLTLLGDAAKGWLAVWLAQTYGASFGLAAPEIAMVGLAVFIGHLWPVFLAFRGGKGVATALGVLLAVNPWLALIAAAVWLAVALLTRYSSLAAMVSAVATAVAAWFIEPGVYAGLTIVIALLLVRRHKQNILNLVSGTESRIGGKKKS</sequence>
<protein>
    <recommendedName>
        <fullName evidence="1">Glycerol-3-phosphate acyltransferase</fullName>
    </recommendedName>
    <alternativeName>
        <fullName evidence="1">Acyl-PO4 G3P acyltransferase</fullName>
    </alternativeName>
    <alternativeName>
        <fullName evidence="1">Acyl-phosphate--glycerol-3-phosphate acyltransferase</fullName>
    </alternativeName>
    <alternativeName>
        <fullName evidence="1">G3P acyltransferase</fullName>
        <shortName evidence="1">GPAT</shortName>
        <ecNumber evidence="1">2.3.1.275</ecNumber>
    </alternativeName>
    <alternativeName>
        <fullName evidence="1">Lysophosphatidic acid synthase</fullName>
        <shortName evidence="1">LPA synthase</shortName>
    </alternativeName>
</protein>
<organism>
    <name type="scientific">Laribacter hongkongensis (strain HLHK9)</name>
    <dbReference type="NCBI Taxonomy" id="557598"/>
    <lineage>
        <taxon>Bacteria</taxon>
        <taxon>Pseudomonadati</taxon>
        <taxon>Pseudomonadota</taxon>
        <taxon>Betaproteobacteria</taxon>
        <taxon>Neisseriales</taxon>
        <taxon>Aquaspirillaceae</taxon>
        <taxon>Laribacter</taxon>
    </lineage>
</organism>
<gene>
    <name evidence="1" type="primary">plsY</name>
    <name type="ordered locus">LHK_00623</name>
</gene>
<feature type="chain" id="PRO_1000149575" description="Glycerol-3-phosphate acyltransferase">
    <location>
        <begin position="1"/>
        <end position="201"/>
    </location>
</feature>
<feature type="transmembrane region" description="Helical" evidence="1">
    <location>
        <begin position="4"/>
        <end position="24"/>
    </location>
</feature>
<feature type="transmembrane region" description="Helical" evidence="1">
    <location>
        <begin position="84"/>
        <end position="104"/>
    </location>
</feature>
<feature type="transmembrane region" description="Helical" evidence="1">
    <location>
        <begin position="116"/>
        <end position="136"/>
    </location>
</feature>
<feature type="transmembrane region" description="Helical" evidence="1">
    <location>
        <begin position="157"/>
        <end position="177"/>
    </location>
</feature>
<reference key="1">
    <citation type="journal article" date="2009" name="PLoS Genet.">
        <title>The complete genome and proteome of Laribacter hongkongensis reveal potential mechanisms for adaptations to different temperatures and habitats.</title>
        <authorList>
            <person name="Woo P.C.Y."/>
            <person name="Lau S.K.P."/>
            <person name="Tse H."/>
            <person name="Teng J.L.L."/>
            <person name="Curreem S.O."/>
            <person name="Tsang A.K.L."/>
            <person name="Fan R.Y.Y."/>
            <person name="Wong G.K.M."/>
            <person name="Huang Y."/>
            <person name="Loman N.J."/>
            <person name="Snyder L.A.S."/>
            <person name="Cai J.J."/>
            <person name="Huang J.-D."/>
            <person name="Mak W."/>
            <person name="Pallen M.J."/>
            <person name="Lok S."/>
            <person name="Yuen K.-Y."/>
        </authorList>
    </citation>
    <scope>NUCLEOTIDE SEQUENCE [LARGE SCALE GENOMIC DNA]</scope>
    <source>
        <strain>HLHK9</strain>
    </source>
</reference>
<name>PLSY_LARHH</name>